<proteinExistence type="inferred from homology"/>
<keyword id="KW-0687">Ribonucleoprotein</keyword>
<keyword id="KW-0689">Ribosomal protein</keyword>
<reference key="1">
    <citation type="submission" date="2007-11" db="EMBL/GenBank/DDBJ databases">
        <title>Genome sequencing of phylogenetically and phenotypically diverse Coxiella burnetii isolates.</title>
        <authorList>
            <person name="Seshadri R."/>
            <person name="Samuel J.E."/>
        </authorList>
    </citation>
    <scope>NUCLEOTIDE SEQUENCE [LARGE SCALE GENOMIC DNA]</scope>
    <source>
        <strain>RSA 331 / Henzerling II</strain>
    </source>
</reference>
<sequence>MHHRKSGRHLNRTSAHRKAMLRNMAVSLFQHELIKTTLPKAKELRRVVEPLITLAKEDTVANRRLAFNRLRDDAIVAKLFKEIAPRHKERPGGYCRVLKYGFRNGDSAPMAIVELVDREESESSED</sequence>
<organism>
    <name type="scientific">Coxiella burnetii (strain RSA 331 / Henzerling II)</name>
    <dbReference type="NCBI Taxonomy" id="360115"/>
    <lineage>
        <taxon>Bacteria</taxon>
        <taxon>Pseudomonadati</taxon>
        <taxon>Pseudomonadota</taxon>
        <taxon>Gammaproteobacteria</taxon>
        <taxon>Legionellales</taxon>
        <taxon>Coxiellaceae</taxon>
        <taxon>Coxiella</taxon>
    </lineage>
</organism>
<accession>A9NAZ6</accession>
<feature type="chain" id="PRO_1000087168" description="Large ribosomal subunit protein bL17">
    <location>
        <begin position="1"/>
        <end position="126"/>
    </location>
</feature>
<comment type="subunit">
    <text evidence="1">Part of the 50S ribosomal subunit. Contacts protein L32.</text>
</comment>
<comment type="similarity">
    <text evidence="1">Belongs to the bacterial ribosomal protein bL17 family.</text>
</comment>
<name>RL17_COXBR</name>
<dbReference type="EMBL" id="CP000890">
    <property type="protein sequence ID" value="ABX78825.1"/>
    <property type="molecule type" value="Genomic_DNA"/>
</dbReference>
<dbReference type="RefSeq" id="WP_010957469.1">
    <property type="nucleotide sequence ID" value="NC_010117.1"/>
</dbReference>
<dbReference type="SMR" id="A9NAZ6"/>
<dbReference type="KEGG" id="cbs:COXBURSA331_A0363"/>
<dbReference type="HOGENOM" id="CLU_074407_2_0_6"/>
<dbReference type="GO" id="GO:0022625">
    <property type="term" value="C:cytosolic large ribosomal subunit"/>
    <property type="evidence" value="ECO:0007669"/>
    <property type="project" value="TreeGrafter"/>
</dbReference>
<dbReference type="GO" id="GO:0003735">
    <property type="term" value="F:structural constituent of ribosome"/>
    <property type="evidence" value="ECO:0007669"/>
    <property type="project" value="InterPro"/>
</dbReference>
<dbReference type="GO" id="GO:0006412">
    <property type="term" value="P:translation"/>
    <property type="evidence" value="ECO:0007669"/>
    <property type="project" value="UniProtKB-UniRule"/>
</dbReference>
<dbReference type="FunFam" id="3.90.1030.10:FF:000001">
    <property type="entry name" value="50S ribosomal protein L17"/>
    <property type="match status" value="1"/>
</dbReference>
<dbReference type="Gene3D" id="3.90.1030.10">
    <property type="entry name" value="Ribosomal protein L17"/>
    <property type="match status" value="1"/>
</dbReference>
<dbReference type="HAMAP" id="MF_01368">
    <property type="entry name" value="Ribosomal_bL17"/>
    <property type="match status" value="1"/>
</dbReference>
<dbReference type="InterPro" id="IPR000456">
    <property type="entry name" value="Ribosomal_bL17"/>
</dbReference>
<dbReference type="InterPro" id="IPR047859">
    <property type="entry name" value="Ribosomal_bL17_CS"/>
</dbReference>
<dbReference type="InterPro" id="IPR036373">
    <property type="entry name" value="Ribosomal_bL17_sf"/>
</dbReference>
<dbReference type="NCBIfam" id="TIGR00059">
    <property type="entry name" value="L17"/>
    <property type="match status" value="1"/>
</dbReference>
<dbReference type="PANTHER" id="PTHR14413:SF16">
    <property type="entry name" value="LARGE RIBOSOMAL SUBUNIT PROTEIN BL17M"/>
    <property type="match status" value="1"/>
</dbReference>
<dbReference type="PANTHER" id="PTHR14413">
    <property type="entry name" value="RIBOSOMAL PROTEIN L17"/>
    <property type="match status" value="1"/>
</dbReference>
<dbReference type="Pfam" id="PF01196">
    <property type="entry name" value="Ribosomal_L17"/>
    <property type="match status" value="1"/>
</dbReference>
<dbReference type="SUPFAM" id="SSF64263">
    <property type="entry name" value="Prokaryotic ribosomal protein L17"/>
    <property type="match status" value="1"/>
</dbReference>
<dbReference type="PROSITE" id="PS01167">
    <property type="entry name" value="RIBOSOMAL_L17"/>
    <property type="match status" value="1"/>
</dbReference>
<gene>
    <name evidence="1" type="primary">rplQ</name>
    <name type="ordered locus">COXBURSA331_A0363</name>
</gene>
<evidence type="ECO:0000255" key="1">
    <source>
        <dbReference type="HAMAP-Rule" id="MF_01368"/>
    </source>
</evidence>
<evidence type="ECO:0000305" key="2"/>
<protein>
    <recommendedName>
        <fullName evidence="1">Large ribosomal subunit protein bL17</fullName>
    </recommendedName>
    <alternativeName>
        <fullName evidence="2">50S ribosomal protein L17</fullName>
    </alternativeName>
</protein>